<proteinExistence type="evidence at transcript level"/>
<protein>
    <recommendedName>
        <fullName evidence="1">Terpene cyclase DEP1</fullName>
        <ecNumber evidence="1">5.4.99.-</ecNumber>
    </recommendedName>
    <alternativeName>
        <fullName evidence="4">Depudecin biosynthesis cluster protein 1</fullName>
    </alternativeName>
</protein>
<organism>
    <name type="scientific">Alternaria brassicicola</name>
    <name type="common">Dark leaf spot agent</name>
    <dbReference type="NCBI Taxonomy" id="29001"/>
    <lineage>
        <taxon>Eukaryota</taxon>
        <taxon>Fungi</taxon>
        <taxon>Dikarya</taxon>
        <taxon>Ascomycota</taxon>
        <taxon>Pezizomycotina</taxon>
        <taxon>Dothideomycetes</taxon>
        <taxon>Pleosporomycetidae</taxon>
        <taxon>Pleosporales</taxon>
        <taxon>Pleosporineae</taxon>
        <taxon>Pleosporaceae</taxon>
        <taxon>Alternaria</taxon>
        <taxon>Alternaria sect. Brassicicola</taxon>
    </lineage>
</organism>
<accession>D2E9W6</accession>
<feature type="chain" id="PRO_0000441935" description="Terpene cyclase DEP1">
    <location>
        <begin position="1"/>
        <end position="369"/>
    </location>
</feature>
<feature type="transmembrane region" description="Helical" evidence="2">
    <location>
        <begin position="9"/>
        <end position="29"/>
    </location>
</feature>
<feature type="transmembrane region" description="Helical" evidence="2">
    <location>
        <begin position="82"/>
        <end position="102"/>
    </location>
</feature>
<feature type="transmembrane region" description="Helical" evidence="2">
    <location>
        <begin position="118"/>
        <end position="138"/>
    </location>
</feature>
<feature type="transmembrane region" description="Helical" evidence="2">
    <location>
        <begin position="157"/>
        <end position="177"/>
    </location>
</feature>
<feature type="transmembrane region" description="Helical" evidence="2">
    <location>
        <begin position="190"/>
        <end position="210"/>
    </location>
</feature>
<feature type="transmembrane region" description="Helical" evidence="2">
    <location>
        <begin position="234"/>
        <end position="254"/>
    </location>
</feature>
<feature type="transmembrane region" description="Helical" evidence="2">
    <location>
        <begin position="298"/>
        <end position="318"/>
    </location>
</feature>
<feature type="transmembrane region" description="Helical" evidence="2">
    <location>
        <begin position="342"/>
        <end position="362"/>
    </location>
</feature>
<comment type="function">
    <text evidence="3">Part of the gene cluster that mediates the biosynthesis of depudecin, a highly oxidized eleven-carbon linear polyketide that acts as a histone deacetylase (HDAC) inhibitor and makes a small contribution to pathogenesis (PubMed:19737099). The reducing polyketide synthase DEP5 is the central enzyme in depudecin biosynthesis by yielding the backbone polyketide chain (PubMed:19737099). The monooxygenases DEP2 and DEP4, as well as the uncharacterized protein DEP1, then act as tailoring enzymes to modify the intermediate polyketide chain into depudecin (PubMed:19737099).</text>
</comment>
<comment type="pathway">
    <text evidence="3">Polyketide biosynthesis.</text>
</comment>
<comment type="subcellular location">
    <subcellularLocation>
        <location evidence="2">Membrane</location>
        <topology evidence="2">Multi-pass membrane protein</topology>
    </subcellularLocation>
</comment>
<comment type="induction">
    <text evidence="3">Expression is positively regulated by the depudecin biosynthesis cluster-specific transcription activator DEP6 (PubMed:19737099).</text>
</comment>
<comment type="similarity">
    <text evidence="5">Belongs to the membrane-bound ascI terpene cyclase family.</text>
</comment>
<dbReference type="EC" id="5.4.99.-" evidence="1"/>
<dbReference type="EMBL" id="FJ977165">
    <property type="protein sequence ID" value="ACZ57550.1"/>
    <property type="molecule type" value="Genomic_DNA"/>
</dbReference>
<dbReference type="PHI-base" id="PHI:2375"/>
<dbReference type="GO" id="GO:0016020">
    <property type="term" value="C:membrane"/>
    <property type="evidence" value="ECO:0007669"/>
    <property type="project" value="UniProtKB-SubCell"/>
</dbReference>
<dbReference type="GO" id="GO:0016853">
    <property type="term" value="F:isomerase activity"/>
    <property type="evidence" value="ECO:0007669"/>
    <property type="project" value="UniProtKB-KW"/>
</dbReference>
<keyword id="KW-0413">Isomerase</keyword>
<keyword id="KW-0472">Membrane</keyword>
<keyword id="KW-0812">Transmembrane</keyword>
<keyword id="KW-1133">Transmembrane helix</keyword>
<reference key="1">
    <citation type="journal article" date="2009" name="Mol. Plant Microbe Interact.">
        <title>Biosynthesis and role in virulence of the histone deacetylase inhibitor depudecin from Alternaria brassicicola.</title>
        <authorList>
            <person name="Wight W.D."/>
            <person name="Kim K.-H."/>
            <person name="Lawrence C.B."/>
            <person name="Walton J.D."/>
        </authorList>
    </citation>
    <scope>NUCLEOTIDE SEQUENCE [GENOMIC DNA]</scope>
    <scope>FUNCTION</scope>
    <scope>INDUCTION</scope>
    <scope>PATHWAY</scope>
    <source>
        <strain>MUCL 202097</strain>
    </source>
</reference>
<sequence length="369" mass="40287">MPQTSTTQFFYLSALGIWGLWVYAFFNGMFDRLDTITRTLHFPDGRPLRSKYTNIGPLDAQLTLLSAFYDVLSNTLTSGPRLLFFDVNYVVACANLWVLIESRRRGVRSWFLKYPAWAMVLCNANGAAIVLPLYLYLVCCSKARLRDASVPKHEATALLVSTVVILLQPLLIFVPAWAGRGGSHLHHGCIALFQVAPIGVSVFHLGLASILPREASDSSPSSRKDSKKCIVASLVLAGTVAAAVHSYTVVGALITRDGQASLTRLFVPAHGFSDPIEVPLQPSGLPAEYMALVENLHLFSQWDWIVVALTSVLYSHLLLSLRDGAVRAKANHWVSPVEAQELVYLTVATIILGPGGAASFALAIRESRI</sequence>
<evidence type="ECO:0000250" key="1">
    <source>
        <dbReference type="UniProtKB" id="A0A455R4Z0"/>
    </source>
</evidence>
<evidence type="ECO:0000255" key="2"/>
<evidence type="ECO:0000269" key="3">
    <source>
    </source>
</evidence>
<evidence type="ECO:0000303" key="4">
    <source>
    </source>
</evidence>
<evidence type="ECO:0000305" key="5"/>
<gene>
    <name evidence="4" type="primary">DEP1</name>
</gene>
<name>DEP1_ALTBR</name>